<feature type="chain" id="PRO_0000061728" description="Cytochrome b">
    <location>
        <begin position="1"/>
        <end position="379"/>
    </location>
</feature>
<feature type="transmembrane region" description="Helical" evidence="2">
    <location>
        <begin position="33"/>
        <end position="53"/>
    </location>
</feature>
<feature type="transmembrane region" description="Helical" evidence="2">
    <location>
        <begin position="77"/>
        <end position="98"/>
    </location>
</feature>
<feature type="transmembrane region" description="Helical" evidence="2">
    <location>
        <begin position="113"/>
        <end position="133"/>
    </location>
</feature>
<feature type="transmembrane region" description="Helical" evidence="2">
    <location>
        <begin position="178"/>
        <end position="198"/>
    </location>
</feature>
<feature type="transmembrane region" description="Helical" evidence="2">
    <location>
        <begin position="226"/>
        <end position="246"/>
    </location>
</feature>
<feature type="transmembrane region" description="Helical" evidence="2">
    <location>
        <begin position="288"/>
        <end position="308"/>
    </location>
</feature>
<feature type="transmembrane region" description="Helical" evidence="2">
    <location>
        <begin position="320"/>
        <end position="340"/>
    </location>
</feature>
<feature type="transmembrane region" description="Helical" evidence="2">
    <location>
        <begin position="347"/>
        <end position="367"/>
    </location>
</feature>
<feature type="binding site" description="axial binding residue" evidence="2">
    <location>
        <position position="83"/>
    </location>
    <ligand>
        <name>heme b</name>
        <dbReference type="ChEBI" id="CHEBI:60344"/>
        <label>b562</label>
    </ligand>
    <ligandPart>
        <name>Fe</name>
        <dbReference type="ChEBI" id="CHEBI:18248"/>
    </ligandPart>
</feature>
<feature type="binding site" description="axial binding residue" evidence="2">
    <location>
        <position position="97"/>
    </location>
    <ligand>
        <name>heme b</name>
        <dbReference type="ChEBI" id="CHEBI:60344"/>
        <label>b566</label>
    </ligand>
    <ligandPart>
        <name>Fe</name>
        <dbReference type="ChEBI" id="CHEBI:18248"/>
    </ligandPart>
</feature>
<feature type="binding site" description="axial binding residue" evidence="2">
    <location>
        <position position="182"/>
    </location>
    <ligand>
        <name>heme b</name>
        <dbReference type="ChEBI" id="CHEBI:60344"/>
        <label>b562</label>
    </ligand>
    <ligandPart>
        <name>Fe</name>
        <dbReference type="ChEBI" id="CHEBI:18248"/>
    </ligandPart>
</feature>
<feature type="binding site" description="axial binding residue" evidence="2">
    <location>
        <position position="196"/>
    </location>
    <ligand>
        <name>heme b</name>
        <dbReference type="ChEBI" id="CHEBI:60344"/>
        <label>b566</label>
    </ligand>
    <ligandPart>
        <name>Fe</name>
        <dbReference type="ChEBI" id="CHEBI:18248"/>
    </ligandPart>
</feature>
<feature type="binding site" evidence="2">
    <location>
        <position position="201"/>
    </location>
    <ligand>
        <name>a ubiquinone</name>
        <dbReference type="ChEBI" id="CHEBI:16389"/>
    </ligand>
</feature>
<organism>
    <name type="scientific">Zapus trinotatus</name>
    <name type="common">Pacific jumping mouse</name>
    <dbReference type="NCBI Taxonomy" id="98661"/>
    <lineage>
        <taxon>Eukaryota</taxon>
        <taxon>Metazoa</taxon>
        <taxon>Chordata</taxon>
        <taxon>Craniata</taxon>
        <taxon>Vertebrata</taxon>
        <taxon>Euteleostomi</taxon>
        <taxon>Mammalia</taxon>
        <taxon>Eutheria</taxon>
        <taxon>Euarchontoglires</taxon>
        <taxon>Glires</taxon>
        <taxon>Rodentia</taxon>
        <taxon>Myomorpha</taxon>
        <taxon>Dipodoidea</taxon>
        <taxon>Dipodidae</taxon>
        <taxon>Zapodinae</taxon>
        <taxon>Zapus</taxon>
    </lineage>
</organism>
<reference key="1">
    <citation type="journal article" date="1999" name="J. Mammal. Evol.">
        <title>MtDNA evidence for repeated pulses of speciation within arvicoline and murid rodents.</title>
        <authorList>
            <person name="Conroy C.J."/>
            <person name="Cook J.A."/>
        </authorList>
    </citation>
    <scope>NUCLEOTIDE SEQUENCE [GENOMIC DNA]</scope>
</reference>
<name>CYB_ZAPTR</name>
<gene>
    <name type="primary">MT-CYB</name>
    <name type="synonym">COB</name>
    <name type="synonym">CYTB</name>
    <name type="synonym">MTCYB</name>
</gene>
<sequence>MINTRKNHPLMKILNESFIDLPTPSNISAWWNFGSLLGACLAIQIITGLFLAMHYTSDTSTAFSSVTHICRDVNYGWLIRYLHANGASLFFICLFLHVGRGLYYGSYTFIETWNIGILLLFAVMATAFMGYVLPWGQMSFWGATVITNLLSAIPYIGSTLVEWIWGGFSVDKATLTRFFAFHFILPFIIAAMAIVHLLFLHETGSNNPLGLISDADKIPFHPYYTVKDALGFLLMLFFFLSLVLFSPDLLGDPDNYSPANPLNTPPHIKPEWYFLFAYAILRSIPNKLGGVIALILSILILAIVPFLHNANQRSMIFRPISQCLYWALVADLVTLTWIGGQPVEHPFILIGQVASILYFSIILIFMPLATILENKLLKW</sequence>
<accession>Q9XNN1</accession>
<dbReference type="EMBL" id="AF119262">
    <property type="protein sequence ID" value="AAD43880.1"/>
    <property type="molecule type" value="Genomic_DNA"/>
</dbReference>
<dbReference type="SMR" id="Q9XNN1"/>
<dbReference type="GO" id="GO:0005743">
    <property type="term" value="C:mitochondrial inner membrane"/>
    <property type="evidence" value="ECO:0007669"/>
    <property type="project" value="UniProtKB-SubCell"/>
</dbReference>
<dbReference type="GO" id="GO:0045275">
    <property type="term" value="C:respiratory chain complex III"/>
    <property type="evidence" value="ECO:0007669"/>
    <property type="project" value="InterPro"/>
</dbReference>
<dbReference type="GO" id="GO:0046872">
    <property type="term" value="F:metal ion binding"/>
    <property type="evidence" value="ECO:0007669"/>
    <property type="project" value="UniProtKB-KW"/>
</dbReference>
<dbReference type="GO" id="GO:0008121">
    <property type="term" value="F:ubiquinol-cytochrome-c reductase activity"/>
    <property type="evidence" value="ECO:0007669"/>
    <property type="project" value="InterPro"/>
</dbReference>
<dbReference type="GO" id="GO:0006122">
    <property type="term" value="P:mitochondrial electron transport, ubiquinol to cytochrome c"/>
    <property type="evidence" value="ECO:0007669"/>
    <property type="project" value="TreeGrafter"/>
</dbReference>
<dbReference type="CDD" id="cd00290">
    <property type="entry name" value="cytochrome_b_C"/>
    <property type="match status" value="1"/>
</dbReference>
<dbReference type="CDD" id="cd00284">
    <property type="entry name" value="Cytochrome_b_N"/>
    <property type="match status" value="1"/>
</dbReference>
<dbReference type="FunFam" id="1.20.810.10:FF:000002">
    <property type="entry name" value="Cytochrome b"/>
    <property type="match status" value="1"/>
</dbReference>
<dbReference type="Gene3D" id="1.20.810.10">
    <property type="entry name" value="Cytochrome Bc1 Complex, Chain C"/>
    <property type="match status" value="1"/>
</dbReference>
<dbReference type="InterPro" id="IPR005798">
    <property type="entry name" value="Cyt_b/b6_C"/>
</dbReference>
<dbReference type="InterPro" id="IPR036150">
    <property type="entry name" value="Cyt_b/b6_C_sf"/>
</dbReference>
<dbReference type="InterPro" id="IPR005797">
    <property type="entry name" value="Cyt_b/b6_N"/>
</dbReference>
<dbReference type="InterPro" id="IPR027387">
    <property type="entry name" value="Cytb/b6-like_sf"/>
</dbReference>
<dbReference type="InterPro" id="IPR030689">
    <property type="entry name" value="Cytochrome_b"/>
</dbReference>
<dbReference type="InterPro" id="IPR048260">
    <property type="entry name" value="Cytochrome_b_C_euk/bac"/>
</dbReference>
<dbReference type="InterPro" id="IPR048259">
    <property type="entry name" value="Cytochrome_b_N_euk/bac"/>
</dbReference>
<dbReference type="InterPro" id="IPR016174">
    <property type="entry name" value="Di-haem_cyt_TM"/>
</dbReference>
<dbReference type="PANTHER" id="PTHR19271">
    <property type="entry name" value="CYTOCHROME B"/>
    <property type="match status" value="1"/>
</dbReference>
<dbReference type="PANTHER" id="PTHR19271:SF16">
    <property type="entry name" value="CYTOCHROME B"/>
    <property type="match status" value="1"/>
</dbReference>
<dbReference type="Pfam" id="PF00032">
    <property type="entry name" value="Cytochrom_B_C"/>
    <property type="match status" value="1"/>
</dbReference>
<dbReference type="Pfam" id="PF00033">
    <property type="entry name" value="Cytochrome_B"/>
    <property type="match status" value="1"/>
</dbReference>
<dbReference type="PIRSF" id="PIRSF038885">
    <property type="entry name" value="COB"/>
    <property type="match status" value="1"/>
</dbReference>
<dbReference type="SUPFAM" id="SSF81648">
    <property type="entry name" value="a domain/subunit of cytochrome bc1 complex (Ubiquinol-cytochrome c reductase)"/>
    <property type="match status" value="1"/>
</dbReference>
<dbReference type="SUPFAM" id="SSF81342">
    <property type="entry name" value="Transmembrane di-heme cytochromes"/>
    <property type="match status" value="1"/>
</dbReference>
<dbReference type="PROSITE" id="PS51003">
    <property type="entry name" value="CYTB_CTER"/>
    <property type="match status" value="1"/>
</dbReference>
<dbReference type="PROSITE" id="PS51002">
    <property type="entry name" value="CYTB_NTER"/>
    <property type="match status" value="1"/>
</dbReference>
<geneLocation type="mitochondrion"/>
<keyword id="KW-0249">Electron transport</keyword>
<keyword id="KW-0349">Heme</keyword>
<keyword id="KW-0408">Iron</keyword>
<keyword id="KW-0472">Membrane</keyword>
<keyword id="KW-0479">Metal-binding</keyword>
<keyword id="KW-0496">Mitochondrion</keyword>
<keyword id="KW-0999">Mitochondrion inner membrane</keyword>
<keyword id="KW-0679">Respiratory chain</keyword>
<keyword id="KW-0812">Transmembrane</keyword>
<keyword id="KW-1133">Transmembrane helix</keyword>
<keyword id="KW-0813">Transport</keyword>
<keyword id="KW-0830">Ubiquinone</keyword>
<comment type="function">
    <text evidence="2">Component of the ubiquinol-cytochrome c reductase complex (complex III or cytochrome b-c1 complex) that is part of the mitochondrial respiratory chain. The b-c1 complex mediates electron transfer from ubiquinol to cytochrome c. Contributes to the generation of a proton gradient across the mitochondrial membrane that is then used for ATP synthesis.</text>
</comment>
<comment type="cofactor">
    <cofactor evidence="2">
        <name>heme b</name>
        <dbReference type="ChEBI" id="CHEBI:60344"/>
    </cofactor>
    <text evidence="2">Binds 2 heme b groups non-covalently.</text>
</comment>
<comment type="subunit">
    <text evidence="2">The cytochrome bc1 complex contains 11 subunits: 3 respiratory subunits (MT-CYB, CYC1 and UQCRFS1), 2 core proteins (UQCRC1 and UQCRC2) and 6 low-molecular weight proteins (UQCRH/QCR6, UQCRB/QCR7, UQCRQ/QCR8, UQCR10/QCR9, UQCR11/QCR10 and a cleavage product of UQCRFS1). This cytochrome bc1 complex then forms a dimer.</text>
</comment>
<comment type="subcellular location">
    <subcellularLocation>
        <location evidence="2">Mitochondrion inner membrane</location>
        <topology evidence="2">Multi-pass membrane protein</topology>
    </subcellularLocation>
</comment>
<comment type="miscellaneous">
    <text evidence="1">Heme 1 (or BL or b562) is low-potential and absorbs at about 562 nm, and heme 2 (or BH or b566) is high-potential and absorbs at about 566 nm.</text>
</comment>
<comment type="similarity">
    <text evidence="3 4">Belongs to the cytochrome b family.</text>
</comment>
<comment type="caution">
    <text evidence="2">The full-length protein contains only eight transmembrane helices, not nine as predicted by bioinformatics tools.</text>
</comment>
<proteinExistence type="inferred from homology"/>
<protein>
    <recommendedName>
        <fullName>Cytochrome b</fullName>
    </recommendedName>
    <alternativeName>
        <fullName>Complex III subunit 3</fullName>
    </alternativeName>
    <alternativeName>
        <fullName>Complex III subunit III</fullName>
    </alternativeName>
    <alternativeName>
        <fullName>Cytochrome b-c1 complex subunit 3</fullName>
    </alternativeName>
    <alternativeName>
        <fullName>Ubiquinol-cytochrome-c reductase complex cytochrome b subunit</fullName>
    </alternativeName>
</protein>
<evidence type="ECO:0000250" key="1"/>
<evidence type="ECO:0000250" key="2">
    <source>
        <dbReference type="UniProtKB" id="P00157"/>
    </source>
</evidence>
<evidence type="ECO:0000255" key="3">
    <source>
        <dbReference type="PROSITE-ProRule" id="PRU00967"/>
    </source>
</evidence>
<evidence type="ECO:0000255" key="4">
    <source>
        <dbReference type="PROSITE-ProRule" id="PRU00968"/>
    </source>
</evidence>